<name>P3H3_MOUSE</name>
<proteinExistence type="evidence at protein level"/>
<comment type="function">
    <text evidence="7 8">Part of a complex composed of PLOD1, P3H3 and P3H4 that catalyzes hydroxylation of lysine residues in collagen alpha chains and is required for normal assembly and cross-linkling of collagen fibrils (PubMed:27119146). Required for normal hydroxylation of lysine residues in type I collagen chains in skin, bone, tendon, aorta and cornea (PubMed:28115524). Required for normal skin stability via its role in hydroxylation of lysine residues in collagen alpha chains and in collagen fibril assembly (PubMed:27119146, PubMed:28115524). Apparently not required for normal prolyl 3-hydroxylation on collagen chains, possibly because it functions redundantly with other prolyl 3-hydroxylases (PubMed:28115524).</text>
</comment>
<comment type="catalytic activity">
    <reaction>
        <text>L-prolyl-[collagen] + 2-oxoglutarate + O2 = trans-3-hydroxy-L-prolyl-[collagen] + succinate + CO2</text>
        <dbReference type="Rhea" id="RHEA:22872"/>
        <dbReference type="Rhea" id="RHEA-COMP:11676"/>
        <dbReference type="Rhea" id="RHEA-COMP:11678"/>
        <dbReference type="ChEBI" id="CHEBI:15379"/>
        <dbReference type="ChEBI" id="CHEBI:16526"/>
        <dbReference type="ChEBI" id="CHEBI:16810"/>
        <dbReference type="ChEBI" id="CHEBI:30031"/>
        <dbReference type="ChEBI" id="CHEBI:50342"/>
        <dbReference type="ChEBI" id="CHEBI:85428"/>
        <dbReference type="EC" id="1.14.11.7"/>
    </reaction>
</comment>
<comment type="cofactor">
    <cofactor evidence="1">
        <name>Fe cation</name>
        <dbReference type="ChEBI" id="CHEBI:24875"/>
    </cofactor>
</comment>
<comment type="cofactor">
    <cofactor evidence="1">
        <name>L-ascorbate</name>
        <dbReference type="ChEBI" id="CHEBI:38290"/>
    </cofactor>
</comment>
<comment type="subunit">
    <text evidence="7">Identified in a complex with PLOD1 and P3H4.</text>
</comment>
<comment type="subcellular location">
    <subcellularLocation>
        <location evidence="5">Endoplasmic reticulum</location>
    </subcellularLocation>
</comment>
<comment type="tissue specificity">
    <text evidence="8">Detected in kidney (at protein level).</text>
</comment>
<comment type="disruption phenotype">
    <text evidence="8">No visible phenotype at birth. Lysine hydroxylation of skin and bone collagen alpha chains is strongly reduced. In contrast, prolyl 3-hydroxylation is not affected, possibly due to complementation by other family members. Dorsal skin displays impaired packing of collagen fibrils, decreased skin tensile strength, and increased skin fragility. Likewise, mice deficient for both P3h3 and P3h4 display decreased lysine hydroxylation of collagen alpha chains, but normal collagen prolyl 3-hydroxylation.</text>
</comment>
<comment type="similarity">
    <text evidence="10">Belongs to the leprecan family.</text>
</comment>
<gene>
    <name evidence="11" type="primary">P3h3</name>
    <name evidence="9" type="synonym">Leprel2</name>
</gene>
<accession>Q8CG70</accession>
<accession>O88836</accession>
<dbReference type="EC" id="1.14.11.7"/>
<dbReference type="EMBL" id="AJ441086">
    <property type="protein sequence ID" value="CAD29580.1"/>
    <property type="molecule type" value="mRNA"/>
</dbReference>
<dbReference type="EMBL" id="AY463530">
    <property type="protein sequence ID" value="AAS45239.1"/>
    <property type="molecule type" value="mRNA"/>
</dbReference>
<dbReference type="EMBL" id="BC003726">
    <property type="protein sequence ID" value="AAH03726.1"/>
    <property type="molecule type" value="mRNA"/>
</dbReference>
<dbReference type="EMBL" id="BC016431">
    <property type="protein sequence ID" value="AAH16431.1"/>
    <property type="molecule type" value="mRNA"/>
</dbReference>
<dbReference type="EMBL" id="AC002397">
    <property type="protein sequence ID" value="AAC36012.1"/>
    <property type="molecule type" value="Genomic_DNA"/>
</dbReference>
<dbReference type="CCDS" id="CCDS20533.1"/>
<dbReference type="RefSeq" id="NP_038562.2">
    <property type="nucleotide sequence ID" value="NM_013534.4"/>
</dbReference>
<dbReference type="SMR" id="Q8CG70"/>
<dbReference type="BioGRID" id="200050">
    <property type="interactions" value="3"/>
</dbReference>
<dbReference type="CORUM" id="Q8CG70"/>
<dbReference type="FunCoup" id="Q8CG70">
    <property type="interactions" value="84"/>
</dbReference>
<dbReference type="STRING" id="10090.ENSMUSP00000023958"/>
<dbReference type="GlyCosmos" id="Q8CG70">
    <property type="glycosylation" value="2 sites, No reported glycans"/>
</dbReference>
<dbReference type="GlyGen" id="Q8CG70">
    <property type="glycosylation" value="3 sites, 1 N-linked glycan (1 site)"/>
</dbReference>
<dbReference type="PhosphoSitePlus" id="Q8CG70"/>
<dbReference type="PaxDb" id="10090-ENSMUSP00000023958"/>
<dbReference type="PeptideAtlas" id="Q8CG70"/>
<dbReference type="ProteomicsDB" id="287749"/>
<dbReference type="Pumba" id="Q8CG70"/>
<dbReference type="Antibodypedia" id="21590">
    <property type="antibodies" value="116 antibodies from 20 providers"/>
</dbReference>
<dbReference type="DNASU" id="14789"/>
<dbReference type="Ensembl" id="ENSMUST00000023958.10">
    <property type="protein sequence ID" value="ENSMUSP00000023958.4"/>
    <property type="gene ID" value="ENSMUSG00000023191.10"/>
</dbReference>
<dbReference type="GeneID" id="14789"/>
<dbReference type="KEGG" id="mmu:14789"/>
<dbReference type="UCSC" id="uc009dsf.1">
    <property type="organism name" value="mouse"/>
</dbReference>
<dbReference type="AGR" id="MGI:1315208"/>
<dbReference type="CTD" id="10536"/>
<dbReference type="MGI" id="MGI:1315208">
    <property type="gene designation" value="P3h3"/>
</dbReference>
<dbReference type="VEuPathDB" id="HostDB:ENSMUSG00000023191"/>
<dbReference type="eggNOG" id="KOG4459">
    <property type="taxonomic scope" value="Eukaryota"/>
</dbReference>
<dbReference type="GeneTree" id="ENSGT00940000159164"/>
<dbReference type="HOGENOM" id="CLU_017820_0_0_1"/>
<dbReference type="InParanoid" id="Q8CG70"/>
<dbReference type="OMA" id="KQCWREP"/>
<dbReference type="OrthoDB" id="8517835at2759"/>
<dbReference type="PhylomeDB" id="Q8CG70"/>
<dbReference type="TreeFam" id="TF320837"/>
<dbReference type="BRENDA" id="1.14.11.7">
    <property type="organism ID" value="3474"/>
</dbReference>
<dbReference type="Reactome" id="R-MMU-1650814">
    <property type="pathway name" value="Collagen biosynthesis and modifying enzymes"/>
</dbReference>
<dbReference type="BioGRID-ORCS" id="14789">
    <property type="hits" value="1 hit in 77 CRISPR screens"/>
</dbReference>
<dbReference type="ChiTaRS" id="P3h3">
    <property type="organism name" value="mouse"/>
</dbReference>
<dbReference type="PRO" id="PR:Q8CG70"/>
<dbReference type="Proteomes" id="UP000000589">
    <property type="component" value="Chromosome 6"/>
</dbReference>
<dbReference type="RNAct" id="Q8CG70">
    <property type="molecule type" value="protein"/>
</dbReference>
<dbReference type="Bgee" id="ENSMUSG00000023191">
    <property type="expression patterns" value="Expressed in humerus cartilage element and 208 other cell types or tissues"/>
</dbReference>
<dbReference type="ExpressionAtlas" id="Q8CG70">
    <property type="expression patterns" value="baseline and differential"/>
</dbReference>
<dbReference type="GO" id="GO:1902494">
    <property type="term" value="C:catalytic complex"/>
    <property type="evidence" value="ECO:0000315"/>
    <property type="project" value="UniProtKB"/>
</dbReference>
<dbReference type="GO" id="GO:0005783">
    <property type="term" value="C:endoplasmic reticulum"/>
    <property type="evidence" value="ECO:0007669"/>
    <property type="project" value="UniProtKB-SubCell"/>
</dbReference>
<dbReference type="GO" id="GO:0005506">
    <property type="term" value="F:iron ion binding"/>
    <property type="evidence" value="ECO:0007669"/>
    <property type="project" value="InterPro"/>
</dbReference>
<dbReference type="GO" id="GO:0031418">
    <property type="term" value="F:L-ascorbic acid binding"/>
    <property type="evidence" value="ECO:0007669"/>
    <property type="project" value="UniProtKB-KW"/>
</dbReference>
<dbReference type="GO" id="GO:0019797">
    <property type="term" value="F:procollagen-proline 3-dioxygenase activity"/>
    <property type="evidence" value="ECO:0007669"/>
    <property type="project" value="UniProtKB-EC"/>
</dbReference>
<dbReference type="GO" id="GO:0032964">
    <property type="term" value="P:collagen biosynthetic process"/>
    <property type="evidence" value="ECO:0000315"/>
    <property type="project" value="UniProtKB"/>
</dbReference>
<dbReference type="GO" id="GO:0008285">
    <property type="term" value="P:negative regulation of cell population proliferation"/>
    <property type="evidence" value="ECO:0007669"/>
    <property type="project" value="Ensembl"/>
</dbReference>
<dbReference type="GO" id="GO:0017185">
    <property type="term" value="P:peptidyl-lysine hydroxylation"/>
    <property type="evidence" value="ECO:0000315"/>
    <property type="project" value="UniProtKB"/>
</dbReference>
<dbReference type="FunFam" id="2.60.120.620:FF:000003">
    <property type="entry name" value="Prolyl 3-hydroxylase 2"/>
    <property type="match status" value="1"/>
</dbReference>
<dbReference type="Gene3D" id="2.60.120.620">
    <property type="entry name" value="q2cbj1_9rhob like domain"/>
    <property type="match status" value="1"/>
</dbReference>
<dbReference type="Gene3D" id="1.25.40.10">
    <property type="entry name" value="Tetratricopeptide repeat domain"/>
    <property type="match status" value="1"/>
</dbReference>
<dbReference type="InterPro" id="IPR056585">
    <property type="entry name" value="Leprecan_dom"/>
</dbReference>
<dbReference type="InterPro" id="IPR005123">
    <property type="entry name" value="Oxoglu/Fe-dep_dioxygenase_dom"/>
</dbReference>
<dbReference type="InterPro" id="IPR039575">
    <property type="entry name" value="P3H"/>
</dbReference>
<dbReference type="InterPro" id="IPR006620">
    <property type="entry name" value="Pro_4_hyd_alph"/>
</dbReference>
<dbReference type="InterPro" id="IPR044862">
    <property type="entry name" value="Pro_4_hyd_alph_FE2OG_OXY"/>
</dbReference>
<dbReference type="InterPro" id="IPR011990">
    <property type="entry name" value="TPR-like_helical_dom_sf"/>
</dbReference>
<dbReference type="PANTHER" id="PTHR14049">
    <property type="entry name" value="LEPRECAN 1"/>
    <property type="match status" value="1"/>
</dbReference>
<dbReference type="PANTHER" id="PTHR14049:SF14">
    <property type="entry name" value="PROLYL 3-HYDROXYLASE 3"/>
    <property type="match status" value="1"/>
</dbReference>
<dbReference type="Pfam" id="PF13640">
    <property type="entry name" value="2OG-FeII_Oxy_3"/>
    <property type="match status" value="1"/>
</dbReference>
<dbReference type="Pfam" id="PF23557">
    <property type="entry name" value="TPR_leprecan"/>
    <property type="match status" value="1"/>
</dbReference>
<dbReference type="SMART" id="SM00702">
    <property type="entry name" value="P4Hc"/>
    <property type="match status" value="1"/>
</dbReference>
<dbReference type="PROSITE" id="PS00014">
    <property type="entry name" value="ER_TARGET"/>
    <property type="match status" value="1"/>
</dbReference>
<dbReference type="PROSITE" id="PS51471">
    <property type="entry name" value="FE2OG_OXY"/>
    <property type="match status" value="1"/>
</dbReference>
<keyword id="KW-0175">Coiled coil</keyword>
<keyword id="KW-0223">Dioxygenase</keyword>
<keyword id="KW-0256">Endoplasmic reticulum</keyword>
<keyword id="KW-0325">Glycoprotein</keyword>
<keyword id="KW-0408">Iron</keyword>
<keyword id="KW-0479">Metal-binding</keyword>
<keyword id="KW-0560">Oxidoreductase</keyword>
<keyword id="KW-1185">Reference proteome</keyword>
<keyword id="KW-0677">Repeat</keyword>
<keyword id="KW-0732">Signal</keyword>
<keyword id="KW-0802">TPR repeat</keyword>
<keyword id="KW-0847">Vitamin C</keyword>
<evidence type="ECO:0000250" key="1"/>
<evidence type="ECO:0000250" key="2">
    <source>
        <dbReference type="UniProtKB" id="Q8IVL6"/>
    </source>
</evidence>
<evidence type="ECO:0000255" key="3"/>
<evidence type="ECO:0000255" key="4">
    <source>
        <dbReference type="PROSITE-ProRule" id="PRU00805"/>
    </source>
</evidence>
<evidence type="ECO:0000255" key="5">
    <source>
        <dbReference type="PROSITE-ProRule" id="PRU10138"/>
    </source>
</evidence>
<evidence type="ECO:0000256" key="6">
    <source>
        <dbReference type="SAM" id="MobiDB-lite"/>
    </source>
</evidence>
<evidence type="ECO:0000269" key="7">
    <source>
    </source>
</evidence>
<evidence type="ECO:0000269" key="8">
    <source>
    </source>
</evidence>
<evidence type="ECO:0000303" key="9">
    <source>
    </source>
</evidence>
<evidence type="ECO:0000305" key="10"/>
<evidence type="ECO:0000312" key="11">
    <source>
        <dbReference type="MGI" id="MGI:1315208"/>
    </source>
</evidence>
<organism>
    <name type="scientific">Mus musculus</name>
    <name type="common">Mouse</name>
    <dbReference type="NCBI Taxonomy" id="10090"/>
    <lineage>
        <taxon>Eukaryota</taxon>
        <taxon>Metazoa</taxon>
        <taxon>Chordata</taxon>
        <taxon>Craniata</taxon>
        <taxon>Vertebrata</taxon>
        <taxon>Euteleostomi</taxon>
        <taxon>Mammalia</taxon>
        <taxon>Eutheria</taxon>
        <taxon>Euarchontoglires</taxon>
        <taxon>Glires</taxon>
        <taxon>Rodentia</taxon>
        <taxon>Myomorpha</taxon>
        <taxon>Muroidea</taxon>
        <taxon>Muridae</taxon>
        <taxon>Murinae</taxon>
        <taxon>Mus</taxon>
        <taxon>Mus</taxon>
    </lineage>
</organism>
<reference key="1">
    <citation type="journal article" date="2004" name="Biochem. Biophys. Res. Commun.">
        <title>LEPREL1, a novel ER and Golgi resident member of the Leprecan family.</title>
        <authorList>
            <person name="Jaernum S."/>
            <person name="Kjellman C."/>
            <person name="Darabi A."/>
            <person name="Nilsson I."/>
            <person name="Edvardsen K."/>
            <person name="Aaman P."/>
        </authorList>
    </citation>
    <scope>NUCLEOTIDE SEQUENCE [MRNA]</scope>
    <source>
        <strain>C57BL/6J</strain>
    </source>
</reference>
<reference key="2">
    <citation type="journal article" date="2004" name="J. Biol. Chem.">
        <title>Prolyl 3-hydroxylase 1, enzyme characterization and identification of a novel family of enzymes.</title>
        <authorList>
            <person name="Vranka J.A."/>
            <person name="Sakai L.Y."/>
            <person name="Bachinger H.P."/>
        </authorList>
    </citation>
    <scope>NUCLEOTIDE SEQUENCE [MRNA]</scope>
</reference>
<reference key="3">
    <citation type="journal article" date="2004" name="Genome Res.">
        <title>The status, quality, and expansion of the NIH full-length cDNA project: the Mammalian Gene Collection (MGC).</title>
        <authorList>
            <consortium name="The MGC Project Team"/>
        </authorList>
    </citation>
    <scope>NUCLEOTIDE SEQUENCE [MRNA] OF 139-732</scope>
    <source>
        <strain>FVB/N</strain>
        <tissue>Mammary tumor</tissue>
    </source>
</reference>
<reference key="4">
    <citation type="journal article" date="1998" name="Genome Res.">
        <title>Comparative sequence analysis of a gene-rich cluster at human chromosome 12p13 and its syntenic region in mouse chromosome 6.</title>
        <authorList>
            <person name="Ansari-Lari M.A."/>
            <person name="Oeltjen J.C."/>
            <person name="Schwartz S."/>
            <person name="Zhang Z."/>
            <person name="Muzny D.M."/>
            <person name="Lu J."/>
            <person name="Gorrell J.H."/>
            <person name="Chinault A.C."/>
            <person name="Belmont J.W."/>
            <person name="Miller W."/>
            <person name="Gibbs R.A."/>
        </authorList>
    </citation>
    <scope>NUCLEOTIDE SEQUENCE [GENOMIC DNA] OF 165-732</scope>
</reference>
<reference key="5">
    <citation type="journal article" date="2010" name="Cell">
        <title>A tissue-specific atlas of mouse protein phosphorylation and expression.</title>
        <authorList>
            <person name="Huttlin E.L."/>
            <person name="Jedrychowski M.P."/>
            <person name="Elias J.E."/>
            <person name="Goswami T."/>
            <person name="Rad R."/>
            <person name="Beausoleil S.A."/>
            <person name="Villen J."/>
            <person name="Haas W."/>
            <person name="Sowa M.E."/>
            <person name="Gygi S.P."/>
        </authorList>
    </citation>
    <scope>IDENTIFICATION BY MASS SPECTROMETRY [LARGE SCALE ANALYSIS]</scope>
    <source>
        <tissue>Lung</tissue>
    </source>
</reference>
<reference key="6">
    <citation type="journal article" date="2016" name="PLoS Genet.">
        <title>Sc65-Null Mice Provide Evidence for a Novel Endoplasmic Reticulum Complex Regulating Collagen Lysyl Hydroxylation.</title>
        <authorList>
            <person name="Heard M.E."/>
            <person name="Besio R."/>
            <person name="Weis M."/>
            <person name="Rai J."/>
            <person name="Hudson D.M."/>
            <person name="Dimori M."/>
            <person name="Zimmerman S.M."/>
            <person name="Kamykowski J.A."/>
            <person name="Hogue W.R."/>
            <person name="Swain F.L."/>
            <person name="Burdine M.S."/>
            <person name="Mackintosh S.G."/>
            <person name="Tackett A.J."/>
            <person name="Suva L.J."/>
            <person name="Eyre D.R."/>
            <person name="Morello R."/>
        </authorList>
    </citation>
    <scope>FUNCTION</scope>
    <scope>IDENTIFICATION IN A COMPLEX WITH PLOD1 AND P3H4</scope>
</reference>
<reference key="7">
    <citation type="journal article" date="2017" name="J. Biol. Chem.">
        <title>P3h3-null and Sc65-null Mice Phenocopy the Collagen Lysine Under-hydroxylation and Cross-linking Abnormality of Ehlers-Danlos Syndrome Type VIA.</title>
        <authorList>
            <person name="Hudson D.M."/>
            <person name="Weis M."/>
            <person name="Rai J."/>
            <person name="Joeng K.S."/>
            <person name="Dimori M."/>
            <person name="Lee B.H."/>
            <person name="Morello R."/>
            <person name="Eyre D.R."/>
        </authorList>
    </citation>
    <scope>FUNCTION</scope>
    <scope>DISRUPTION PHENOTYPE</scope>
    <scope>TISSUE SPECIFICITY</scope>
</reference>
<protein>
    <recommendedName>
        <fullName evidence="11">Prolyl 3-hydroxylase 3</fullName>
        <ecNumber>1.14.11.7</ecNumber>
    </recommendedName>
    <alternativeName>
        <fullName evidence="9">Leprecan-like protein 2</fullName>
    </alternativeName>
    <alternativeName>
        <fullName evidence="2">Protein B</fullName>
    </alternativeName>
</protein>
<feature type="signal peptide" evidence="3">
    <location>
        <begin position="1"/>
        <end position="19"/>
    </location>
</feature>
<feature type="chain" id="PRO_0000240361" description="Prolyl 3-hydroxylase 3">
    <location>
        <begin position="20"/>
        <end position="732"/>
    </location>
</feature>
<feature type="repeat" description="TPR 1">
    <location>
        <begin position="39"/>
        <end position="72"/>
    </location>
</feature>
<feature type="repeat" description="TPR 2">
    <location>
        <begin position="152"/>
        <end position="185"/>
    </location>
</feature>
<feature type="repeat" description="TPR 3">
    <location>
        <begin position="214"/>
        <end position="247"/>
    </location>
</feature>
<feature type="repeat" description="TPR 4">
    <location>
        <begin position="312"/>
        <end position="345"/>
    </location>
</feature>
<feature type="domain" description="Fe2OG dioxygenase" evidence="4">
    <location>
        <begin position="557"/>
        <end position="671"/>
    </location>
</feature>
<feature type="region of interest" description="Disordered" evidence="6">
    <location>
        <begin position="15"/>
        <end position="35"/>
    </location>
</feature>
<feature type="region of interest" description="Disordered" evidence="6">
    <location>
        <begin position="676"/>
        <end position="732"/>
    </location>
</feature>
<feature type="coiled-coil region" evidence="3">
    <location>
        <begin position="674"/>
        <end position="703"/>
    </location>
</feature>
<feature type="short sequence motif" description="Prevents secretion from ER" evidence="5">
    <location>
        <begin position="729"/>
        <end position="732"/>
    </location>
</feature>
<feature type="compositionally biased region" description="Pro residues" evidence="6">
    <location>
        <begin position="15"/>
        <end position="25"/>
    </location>
</feature>
<feature type="compositionally biased region" description="Basic and acidic residues" evidence="6">
    <location>
        <begin position="676"/>
        <end position="687"/>
    </location>
</feature>
<feature type="compositionally biased region" description="Acidic residues" evidence="6">
    <location>
        <begin position="688"/>
        <end position="698"/>
    </location>
</feature>
<feature type="compositionally biased region" description="Basic residues" evidence="6">
    <location>
        <begin position="722"/>
        <end position="732"/>
    </location>
</feature>
<feature type="active site" evidence="1">
    <location>
        <position position="662"/>
    </location>
</feature>
<feature type="binding site">
    <location>
        <position position="580"/>
    </location>
    <ligand>
        <name>Fe cation</name>
        <dbReference type="ChEBI" id="CHEBI:24875"/>
    </ligand>
</feature>
<feature type="binding site">
    <location>
        <position position="582"/>
    </location>
    <ligand>
        <name>Fe cation</name>
        <dbReference type="ChEBI" id="CHEBI:24875"/>
    </ligand>
</feature>
<feature type="binding site">
    <location>
        <position position="652"/>
    </location>
    <ligand>
        <name>Fe cation</name>
        <dbReference type="ChEBI" id="CHEBI:24875"/>
    </ligand>
</feature>
<feature type="glycosylation site" description="N-linked (GlcNAc...) asparagine" evidence="3">
    <location>
        <position position="327"/>
    </location>
</feature>
<feature type="glycosylation site" description="N-linked (GlcNAc...) asparagine" evidence="3">
    <location>
        <position position="458"/>
    </location>
</feature>
<sequence length="732" mass="81701">MLRLLRLLLLLLLPPPGSPEPPEPPGLAQLSPGSPPQAPDLLYADGLRAYSAGAWAPAVALLREALRSRAALGRARQECGASCAAEPGAALPSQLLGAPHPVSGPGVWEPLLLRATLRRAECLTQCAVRRLGPGGAARLRVGSALRDAFRRREPYNYLQRAYYQLKKLDLAASAAHTFFVANPTHLQMREDMAKYRRMSAIRPQSFRDLVTPLYWAAYDTGLELLEQREAALALPQLEEALQGSLAHMESCRAACEGPEEHQGAEEEGEGSQGGLYEAIAGHWIRVLQCRQHCVADTATRPGRSFPVQDFLLSQLRRLHEAYAQVGNMSQAMENVLSVLLFYPEDEAAKKALNQYQTQLGEPRPDLGPREDIQRFILRSLGEKRQLYYAMEHLGTSFKDPDSWTPEALIPKALRERLREDQEKKPWDHQPPQQKPLAHWKDALLMEGVTLTQDAQQLNGSERAVLDGLLTSAECGVLLQLAKDAAQAGARSGYRGRRSPHSPHERFEGLTVLKAAQLARAGTVGRPGAKLLLEVSERVRTLTQAYFSPERPLHLSFTHLVCRSAIEGEQEQRMDLSHPVHADNCVLDPDTGECWREPPAYTYRDYSGLLYLNDDFKGGDLFFTQPNALTVTAQVRPRCGRLVAFSSGGENPHGVWAVTRGRRCALALWHTWAPEHSEQEWTEAKELLQEEEEEEEEEDILSRDPSPEPPSHKLQRVQEKAGKPRRVRVREEL</sequence>